<reference key="1">
    <citation type="journal article" date="2011" name="J. Bacteriol.">
        <title>Comparative genomics of 28 Salmonella enterica isolates: evidence for CRISPR-mediated adaptive sublineage evolution.</title>
        <authorList>
            <person name="Fricke W.F."/>
            <person name="Mammel M.K."/>
            <person name="McDermott P.F."/>
            <person name="Tartera C."/>
            <person name="White D.G."/>
            <person name="Leclerc J.E."/>
            <person name="Ravel J."/>
            <person name="Cebula T.A."/>
        </authorList>
    </citation>
    <scope>NUCLEOTIDE SEQUENCE [LARGE SCALE GENOMIC DNA]</scope>
    <source>
        <strain>SL254</strain>
    </source>
</reference>
<proteinExistence type="inferred from homology"/>
<organism>
    <name type="scientific">Salmonella newport (strain SL254)</name>
    <dbReference type="NCBI Taxonomy" id="423368"/>
    <lineage>
        <taxon>Bacteria</taxon>
        <taxon>Pseudomonadati</taxon>
        <taxon>Pseudomonadota</taxon>
        <taxon>Gammaproteobacteria</taxon>
        <taxon>Enterobacterales</taxon>
        <taxon>Enterobacteriaceae</taxon>
        <taxon>Salmonella</taxon>
    </lineage>
</organism>
<sequence length="402" mass="44384">MSRVSQARNLGKYFLLIDNMLVVLGFFVVFPLISIRFVDQMGWAAVMVGIALGLRQFIQQGLGIFGGAIADRFGAKPMIVTGMLMRAAGFATMGIAHEPWLLWFSCFLSGLGGTLFDPPRSALVVKLIRPEQRGRFFSLLMMQDSAGAVIGALLGSWLLQYDFRLVCATGAILFILCALFNAWLLPAWKLSTVRTPVREGMRRVMSDKRFVTYVLTLAGYYMLAVQVMLMLPIMVNDIAGSPAAVKWMYAIEACLSLTLLYPIARWSEKRFRLEHRLMAGLLVMSLSMLPIGMVGNLQQLFTLICAFYIGSVIAEPARETLSASLADARARGSYMGFSRLGLAIGGAIGYIGGGWLFDMGKALAQPELPWMMLGIIGFITFLALGWQFSHKRTPRRMLEPGA</sequence>
<dbReference type="EMBL" id="CP001113">
    <property type="protein sequence ID" value="ACF61200.1"/>
    <property type="molecule type" value="Genomic_DNA"/>
</dbReference>
<dbReference type="RefSeq" id="WP_000092178.1">
    <property type="nucleotide sequence ID" value="NZ_CCMR01000003.1"/>
</dbReference>
<dbReference type="SMR" id="B4T2Z8"/>
<dbReference type="KEGG" id="see:SNSL254_A1263"/>
<dbReference type="HOGENOM" id="CLU_001265_60_2_6"/>
<dbReference type="Proteomes" id="UP000008824">
    <property type="component" value="Chromosome"/>
</dbReference>
<dbReference type="GO" id="GO:0005886">
    <property type="term" value="C:plasma membrane"/>
    <property type="evidence" value="ECO:0007669"/>
    <property type="project" value="UniProtKB-SubCell"/>
</dbReference>
<dbReference type="GO" id="GO:0022857">
    <property type="term" value="F:transmembrane transporter activity"/>
    <property type="evidence" value="ECO:0007669"/>
    <property type="project" value="UniProtKB-UniRule"/>
</dbReference>
<dbReference type="CDD" id="cd17329">
    <property type="entry name" value="MFS_MdtH_MDR_like"/>
    <property type="match status" value="1"/>
</dbReference>
<dbReference type="FunFam" id="1.20.1250.20:FF:000039">
    <property type="entry name" value="Multidrug resistance protein MdtH"/>
    <property type="match status" value="1"/>
</dbReference>
<dbReference type="Gene3D" id="1.20.1250.20">
    <property type="entry name" value="MFS general substrate transporter like domains"/>
    <property type="match status" value="1"/>
</dbReference>
<dbReference type="HAMAP" id="MF_01529">
    <property type="entry name" value="MFS_MdtH"/>
    <property type="match status" value="1"/>
</dbReference>
<dbReference type="InterPro" id="IPR011701">
    <property type="entry name" value="MFS"/>
</dbReference>
<dbReference type="InterPro" id="IPR020846">
    <property type="entry name" value="MFS_dom"/>
</dbReference>
<dbReference type="InterPro" id="IPR036259">
    <property type="entry name" value="MFS_trans_sf"/>
</dbReference>
<dbReference type="InterPro" id="IPR050171">
    <property type="entry name" value="MFS_Transporters"/>
</dbReference>
<dbReference type="InterPro" id="IPR022855">
    <property type="entry name" value="Multidrug-R_MdtH"/>
</dbReference>
<dbReference type="NCBIfam" id="NF008650">
    <property type="entry name" value="PRK11646.1"/>
    <property type="match status" value="1"/>
</dbReference>
<dbReference type="PANTHER" id="PTHR23517:SF2">
    <property type="entry name" value="MULTIDRUG RESISTANCE PROTEIN MDTH"/>
    <property type="match status" value="1"/>
</dbReference>
<dbReference type="PANTHER" id="PTHR23517">
    <property type="entry name" value="RESISTANCE PROTEIN MDTM, PUTATIVE-RELATED-RELATED"/>
    <property type="match status" value="1"/>
</dbReference>
<dbReference type="Pfam" id="PF07690">
    <property type="entry name" value="MFS_1"/>
    <property type="match status" value="1"/>
</dbReference>
<dbReference type="SUPFAM" id="SSF103473">
    <property type="entry name" value="MFS general substrate transporter"/>
    <property type="match status" value="1"/>
</dbReference>
<dbReference type="PROSITE" id="PS50850">
    <property type="entry name" value="MFS"/>
    <property type="match status" value="1"/>
</dbReference>
<protein>
    <recommendedName>
        <fullName evidence="1">Multidrug resistance protein MdtH</fullName>
    </recommendedName>
</protein>
<accession>B4T2Z8</accession>
<feature type="chain" id="PRO_1000200809" description="Multidrug resistance protein MdtH">
    <location>
        <begin position="1"/>
        <end position="402"/>
    </location>
</feature>
<feature type="topological domain" description="Cytoplasmic" evidence="1">
    <location>
        <begin position="1"/>
        <end position="12"/>
    </location>
</feature>
<feature type="transmembrane region" description="Helical" evidence="1">
    <location>
        <begin position="13"/>
        <end position="33"/>
    </location>
</feature>
<feature type="topological domain" description="Periplasmic" evidence="1">
    <location>
        <begin position="34"/>
        <end position="98"/>
    </location>
</feature>
<feature type="transmembrane region" description="Helical" evidence="1">
    <location>
        <begin position="99"/>
        <end position="116"/>
    </location>
</feature>
<feature type="topological domain" description="Cytoplasmic" evidence="1">
    <location>
        <begin position="117"/>
        <end position="138"/>
    </location>
</feature>
<feature type="transmembrane region" description="Helical" evidence="1">
    <location>
        <begin position="139"/>
        <end position="159"/>
    </location>
</feature>
<feature type="topological domain" description="Periplasmic" evidence="1">
    <location>
        <begin position="160"/>
        <end position="164"/>
    </location>
</feature>
<feature type="transmembrane region" description="Helical" evidence="1">
    <location>
        <begin position="165"/>
        <end position="185"/>
    </location>
</feature>
<feature type="topological domain" description="Cytoplasmic" evidence="1">
    <location>
        <begin position="186"/>
        <end position="213"/>
    </location>
</feature>
<feature type="transmembrane region" description="Helical" evidence="1">
    <location>
        <begin position="214"/>
        <end position="234"/>
    </location>
</feature>
<feature type="topological domain" description="Periplasmic" evidence="1">
    <location>
        <begin position="235"/>
        <end position="243"/>
    </location>
</feature>
<feature type="transmembrane region" description="Helical" evidence="1">
    <location>
        <begin position="244"/>
        <end position="264"/>
    </location>
</feature>
<feature type="topological domain" description="Cytoplasmic" evidence="1">
    <location>
        <begin position="265"/>
        <end position="276"/>
    </location>
</feature>
<feature type="transmembrane region" description="Helical" evidence="1">
    <location>
        <begin position="277"/>
        <end position="297"/>
    </location>
</feature>
<feature type="topological domain" description="Periplasmic" evidence="1">
    <location>
        <begin position="298"/>
        <end position="299"/>
    </location>
</feature>
<feature type="transmembrane region" description="Helical" evidence="1">
    <location>
        <begin position="300"/>
        <end position="320"/>
    </location>
</feature>
<feature type="topological domain" description="Cytoplasmic" evidence="1">
    <location>
        <begin position="321"/>
        <end position="339"/>
    </location>
</feature>
<feature type="transmembrane region" description="Helical" evidence="1">
    <location>
        <begin position="340"/>
        <end position="360"/>
    </location>
</feature>
<feature type="topological domain" description="Periplasmic" evidence="1">
    <location>
        <begin position="361"/>
        <end position="367"/>
    </location>
</feature>
<feature type="transmembrane region" description="Helical" evidence="1">
    <location>
        <begin position="368"/>
        <end position="388"/>
    </location>
</feature>
<feature type="topological domain" description="Cytoplasmic" evidence="1">
    <location>
        <begin position="389"/>
        <end position="402"/>
    </location>
</feature>
<gene>
    <name evidence="1" type="primary">mdtH</name>
    <name type="ordered locus">SNSL254_A1263</name>
</gene>
<evidence type="ECO:0000255" key="1">
    <source>
        <dbReference type="HAMAP-Rule" id="MF_01529"/>
    </source>
</evidence>
<keyword id="KW-0997">Cell inner membrane</keyword>
<keyword id="KW-1003">Cell membrane</keyword>
<keyword id="KW-0472">Membrane</keyword>
<keyword id="KW-0812">Transmembrane</keyword>
<keyword id="KW-1133">Transmembrane helix</keyword>
<keyword id="KW-0813">Transport</keyword>
<name>MDTH_SALNS</name>
<comment type="subcellular location">
    <subcellularLocation>
        <location evidence="1">Cell inner membrane</location>
        <topology evidence="1">Multi-pass membrane protein</topology>
    </subcellularLocation>
</comment>
<comment type="similarity">
    <text evidence="1">Belongs to the major facilitator superfamily. DHA1 family. MdtH (TC 2.A.1.2.21) subfamily.</text>
</comment>